<name>RBFA_HAEIN</name>
<comment type="function">
    <text evidence="1">One of several proteins that assist in the late maturation steps of the functional core of the 30S ribosomal subunit. Associates with free 30S ribosomal subunits (but not with 30S subunits that are part of 70S ribosomes or polysomes). Required for efficient processing of 16S rRNA. May interact with the 5'-terminal helix region of 16S rRNA.</text>
</comment>
<comment type="subunit">
    <text evidence="1 2">Monomer (Ref.2). Binds 30S ribosomal subunits, but not 50S ribosomal subunits or 70S ribosomes.</text>
</comment>
<comment type="subcellular location">
    <subcellularLocation>
        <location evidence="1">Cytoplasm</location>
    </subcellularLocation>
</comment>
<comment type="similarity">
    <text evidence="1">Belongs to the RbfA family.</text>
</comment>
<organism>
    <name type="scientific">Haemophilus influenzae (strain ATCC 51907 / DSM 11121 / KW20 / Rd)</name>
    <dbReference type="NCBI Taxonomy" id="71421"/>
    <lineage>
        <taxon>Bacteria</taxon>
        <taxon>Pseudomonadati</taxon>
        <taxon>Pseudomonadota</taxon>
        <taxon>Gammaproteobacteria</taxon>
        <taxon>Pasteurellales</taxon>
        <taxon>Pasteurellaceae</taxon>
        <taxon>Haemophilus</taxon>
    </lineage>
</organism>
<sequence length="128" mass="14805">MAREFKRSDRVAQEIQKEIAVILQREVKDPRIGMVTVSDVEVSSDLSYAKIFVTFLFDHDEMAIEQGMKGLEKASPYIRSLLGKAMRLRIVPEIRFIYDQSLVEGMRMSNLVTNVVREDEKKHVEESN</sequence>
<reference key="1">
    <citation type="journal article" date="1995" name="Science">
        <title>Whole-genome random sequencing and assembly of Haemophilus influenzae Rd.</title>
        <authorList>
            <person name="Fleischmann R.D."/>
            <person name="Adams M.D."/>
            <person name="White O."/>
            <person name="Clayton R.A."/>
            <person name="Kirkness E.F."/>
            <person name="Kerlavage A.R."/>
            <person name="Bult C.J."/>
            <person name="Tomb J.-F."/>
            <person name="Dougherty B.A."/>
            <person name="Merrick J.M."/>
            <person name="McKenney K."/>
            <person name="Sutton G.G."/>
            <person name="FitzHugh W."/>
            <person name="Fields C.A."/>
            <person name="Gocayne J.D."/>
            <person name="Scott J.D."/>
            <person name="Shirley R."/>
            <person name="Liu L.-I."/>
            <person name="Glodek A."/>
            <person name="Kelley J.M."/>
            <person name="Weidman J.F."/>
            <person name="Phillips C.A."/>
            <person name="Spriggs T."/>
            <person name="Hedblom E."/>
            <person name="Cotton M.D."/>
            <person name="Utterback T.R."/>
            <person name="Hanna M.C."/>
            <person name="Nguyen D.T."/>
            <person name="Saudek D.M."/>
            <person name="Brandon R.C."/>
            <person name="Fine L.D."/>
            <person name="Fritchman J.L."/>
            <person name="Fuhrmann J.L."/>
            <person name="Geoghagen N.S.M."/>
            <person name="Gnehm C.L."/>
            <person name="McDonald L.A."/>
            <person name="Small K.V."/>
            <person name="Fraser C.M."/>
            <person name="Smith H.O."/>
            <person name="Venter J.C."/>
        </authorList>
    </citation>
    <scope>NUCLEOTIDE SEQUENCE [LARGE SCALE GENOMIC DNA]</scope>
    <source>
        <strain>ATCC 51907 / DSM 11121 / KW20 / Rd</strain>
    </source>
</reference>
<reference key="2">
    <citation type="submission" date="2001-07" db="PDB data bank">
        <title>The 1.7-A crystal structure of HI1288 - ribosome binding factor A (rbfA), a cold response protein.</title>
        <authorList>
            <person name="Bonander N."/>
            <person name="Tordova M."/>
            <person name="Howard A.J."/>
            <person name="Eisenstein E."/>
            <person name="Gilliland G.L."/>
        </authorList>
    </citation>
    <scope>X-RAY CRYSTALLOGRAPHY (1.70 ANGSTROMS)</scope>
    <scope>SUBUNIT</scope>
</reference>
<dbReference type="EMBL" id="L42023">
    <property type="protein sequence ID" value="AAC22937.1"/>
    <property type="molecule type" value="Genomic_DNA"/>
</dbReference>
<dbReference type="PIR" id="A64170">
    <property type="entry name" value="A64170"/>
</dbReference>
<dbReference type="RefSeq" id="NP_439440.1">
    <property type="nucleotide sequence ID" value="NC_000907.1"/>
</dbReference>
<dbReference type="PDB" id="1JOS">
    <property type="method" value="X-ray"/>
    <property type="resolution" value="1.70 A"/>
    <property type="chains" value="A=1-128"/>
</dbReference>
<dbReference type="PDBsum" id="1JOS"/>
<dbReference type="SMR" id="P45141"/>
<dbReference type="STRING" id="71421.HI_1288"/>
<dbReference type="EnsemblBacteria" id="AAC22937">
    <property type="protein sequence ID" value="AAC22937"/>
    <property type="gene ID" value="HI_1288"/>
</dbReference>
<dbReference type="KEGG" id="hin:HI_1288"/>
<dbReference type="PATRIC" id="fig|71421.8.peg.1340"/>
<dbReference type="eggNOG" id="COG0858">
    <property type="taxonomic scope" value="Bacteria"/>
</dbReference>
<dbReference type="HOGENOM" id="CLU_089475_5_0_6"/>
<dbReference type="OrthoDB" id="307788at2"/>
<dbReference type="PhylomeDB" id="P45141"/>
<dbReference type="BioCyc" id="HINF71421:G1GJ1-1314-MONOMER"/>
<dbReference type="EvolutionaryTrace" id="P45141"/>
<dbReference type="Proteomes" id="UP000000579">
    <property type="component" value="Chromosome"/>
</dbReference>
<dbReference type="GO" id="GO:0005829">
    <property type="term" value="C:cytosol"/>
    <property type="evidence" value="ECO:0000318"/>
    <property type="project" value="GO_Central"/>
</dbReference>
<dbReference type="GO" id="GO:0043024">
    <property type="term" value="F:ribosomal small subunit binding"/>
    <property type="evidence" value="ECO:0000318"/>
    <property type="project" value="GO_Central"/>
</dbReference>
<dbReference type="GO" id="GO:0030490">
    <property type="term" value="P:maturation of SSU-rRNA"/>
    <property type="evidence" value="ECO:0007669"/>
    <property type="project" value="UniProtKB-UniRule"/>
</dbReference>
<dbReference type="GO" id="GO:0042254">
    <property type="term" value="P:ribosome biogenesis"/>
    <property type="evidence" value="ECO:0000318"/>
    <property type="project" value="GO_Central"/>
</dbReference>
<dbReference type="FunFam" id="3.30.300.20:FF:000007">
    <property type="entry name" value="Ribosome-binding factor A"/>
    <property type="match status" value="1"/>
</dbReference>
<dbReference type="Gene3D" id="3.30.300.20">
    <property type="match status" value="1"/>
</dbReference>
<dbReference type="HAMAP" id="MF_00003">
    <property type="entry name" value="RbfA"/>
    <property type="match status" value="1"/>
</dbReference>
<dbReference type="InterPro" id="IPR015946">
    <property type="entry name" value="KH_dom-like_a/b"/>
</dbReference>
<dbReference type="InterPro" id="IPR000238">
    <property type="entry name" value="RbfA"/>
</dbReference>
<dbReference type="InterPro" id="IPR023799">
    <property type="entry name" value="RbfA_dom_sf"/>
</dbReference>
<dbReference type="InterPro" id="IPR020053">
    <property type="entry name" value="Ribosome-bd_factorA_CS"/>
</dbReference>
<dbReference type="NCBIfam" id="TIGR00082">
    <property type="entry name" value="rbfA"/>
    <property type="match status" value="1"/>
</dbReference>
<dbReference type="PANTHER" id="PTHR33515">
    <property type="entry name" value="RIBOSOME-BINDING FACTOR A, CHLOROPLASTIC-RELATED"/>
    <property type="match status" value="1"/>
</dbReference>
<dbReference type="PANTHER" id="PTHR33515:SF1">
    <property type="entry name" value="RIBOSOME-BINDING FACTOR A, CHLOROPLASTIC-RELATED"/>
    <property type="match status" value="1"/>
</dbReference>
<dbReference type="Pfam" id="PF02033">
    <property type="entry name" value="RBFA"/>
    <property type="match status" value="1"/>
</dbReference>
<dbReference type="SUPFAM" id="SSF89919">
    <property type="entry name" value="Ribosome-binding factor A, RbfA"/>
    <property type="match status" value="1"/>
</dbReference>
<dbReference type="PROSITE" id="PS01319">
    <property type="entry name" value="RBFA"/>
    <property type="match status" value="1"/>
</dbReference>
<accession>P45141</accession>
<keyword id="KW-0002">3D-structure</keyword>
<keyword id="KW-0963">Cytoplasm</keyword>
<keyword id="KW-1185">Reference proteome</keyword>
<keyword id="KW-0690">Ribosome biogenesis</keyword>
<protein>
    <recommendedName>
        <fullName evidence="1">Ribosome-binding factor A</fullName>
    </recommendedName>
</protein>
<feature type="chain" id="PRO_0000102670" description="Ribosome-binding factor A">
    <location>
        <begin position="1"/>
        <end position="128"/>
    </location>
</feature>
<feature type="helix" evidence="3">
    <location>
        <begin position="8"/>
        <end position="26"/>
    </location>
</feature>
<feature type="turn" evidence="3">
    <location>
        <begin position="30"/>
        <end position="32"/>
    </location>
</feature>
<feature type="strand" evidence="3">
    <location>
        <begin position="35"/>
        <end position="42"/>
    </location>
</feature>
<feature type="strand" evidence="3">
    <location>
        <begin position="48"/>
        <end position="56"/>
    </location>
</feature>
<feature type="helix" evidence="3">
    <location>
        <begin position="61"/>
        <end position="73"/>
    </location>
</feature>
<feature type="helix" evidence="3">
    <location>
        <begin position="75"/>
        <end position="86"/>
    </location>
</feature>
<feature type="strand" evidence="3">
    <location>
        <begin position="93"/>
        <end position="98"/>
    </location>
</feature>
<proteinExistence type="evidence at protein level"/>
<gene>
    <name evidence="1" type="primary">rbfA</name>
    <name type="ordered locus">HI_1288</name>
</gene>
<evidence type="ECO:0000255" key="1">
    <source>
        <dbReference type="HAMAP-Rule" id="MF_00003"/>
    </source>
</evidence>
<evidence type="ECO:0000305" key="2">
    <source ref="2"/>
</evidence>
<evidence type="ECO:0007829" key="3">
    <source>
        <dbReference type="PDB" id="1JOS"/>
    </source>
</evidence>